<keyword id="KW-0256">Endoplasmic reticulum</keyword>
<keyword id="KW-0443">Lipid metabolism</keyword>
<keyword id="KW-0472">Membrane</keyword>
<keyword id="KW-0521">NADP</keyword>
<keyword id="KW-0547">Nucleotide-binding</keyword>
<keyword id="KW-0560">Oxidoreductase</keyword>
<keyword id="KW-1185">Reference proteome</keyword>
<keyword id="KW-0746">Sphingolipid metabolism</keyword>
<keyword id="KW-0812">Transmembrane</keyword>
<keyword id="KW-1133">Transmembrane helix</keyword>
<evidence type="ECO:0000250" key="1">
    <source>
        <dbReference type="UniProtKB" id="L0E2Z4"/>
    </source>
</evidence>
<evidence type="ECO:0000250" key="2">
    <source>
        <dbReference type="UniProtKB" id="O93868"/>
    </source>
</evidence>
<evidence type="ECO:0000250" key="3">
    <source>
        <dbReference type="UniProtKB" id="P0CR36"/>
    </source>
</evidence>
<evidence type="ECO:0000250" key="4">
    <source>
        <dbReference type="UniProtKB" id="P38342"/>
    </source>
</evidence>
<evidence type="ECO:0000250" key="5">
    <source>
        <dbReference type="UniProtKB" id="P40471"/>
    </source>
</evidence>
<evidence type="ECO:0000255" key="6"/>
<evidence type="ECO:0000305" key="7"/>
<feature type="chain" id="PRO_0000054793" description="3-ketodihydrosphingosine reductase TSC10">
    <location>
        <begin position="1"/>
        <end position="363"/>
    </location>
</feature>
<feature type="transmembrane region" description="Helical" evidence="6">
    <location>
        <begin position="324"/>
        <end position="344"/>
    </location>
</feature>
<feature type="short sequence motif" description="GXSXG" evidence="5">
    <location>
        <begin position="13"/>
        <end position="17"/>
    </location>
</feature>
<feature type="active site" description="Proton donor" evidence="2">
    <location>
        <position position="206"/>
    </location>
</feature>
<feature type="active site" description="Proton acceptor" evidence="2">
    <location>
        <position position="220"/>
    </location>
</feature>
<feature type="active site" description="Lowers pKa of active site Tyr" evidence="2">
    <location>
        <position position="224"/>
    </location>
</feature>
<feature type="binding site" evidence="1">
    <location>
        <position position="10"/>
    </location>
    <ligand>
        <name>NADP(+)</name>
        <dbReference type="ChEBI" id="CHEBI:58349"/>
    </ligand>
</feature>
<feature type="binding site" evidence="3">
    <location>
        <position position="13"/>
    </location>
    <ligand>
        <name>NADPH</name>
        <dbReference type="ChEBI" id="CHEBI:57783"/>
    </ligand>
</feature>
<feature type="binding site" evidence="3">
    <location>
        <position position="15"/>
    </location>
    <ligand>
        <name>NADPH</name>
        <dbReference type="ChEBI" id="CHEBI:57783"/>
    </ligand>
</feature>
<feature type="binding site" evidence="3">
    <location>
        <position position="17"/>
    </location>
    <ligand>
        <name>NADPH</name>
        <dbReference type="ChEBI" id="CHEBI:57783"/>
    </ligand>
</feature>
<feature type="binding site" evidence="1">
    <location>
        <position position="18"/>
    </location>
    <ligand>
        <name>NADP(+)</name>
        <dbReference type="ChEBI" id="CHEBI:58349"/>
    </ligand>
</feature>
<feature type="binding site" evidence="3">
    <location>
        <position position="40"/>
    </location>
    <ligand>
        <name>NADPH</name>
        <dbReference type="ChEBI" id="CHEBI:57783"/>
    </ligand>
</feature>
<feature type="binding site" evidence="3">
    <location>
        <position position="44"/>
    </location>
    <ligand>
        <name>NADPH</name>
        <dbReference type="ChEBI" id="CHEBI:57783"/>
    </ligand>
</feature>
<feature type="binding site" evidence="1">
    <location>
        <position position="131"/>
    </location>
    <ligand>
        <name>NADP(+)</name>
        <dbReference type="ChEBI" id="CHEBI:58349"/>
    </ligand>
</feature>
<feature type="binding site" evidence="3">
    <location>
        <position position="131"/>
    </location>
    <ligand>
        <name>NADPH</name>
        <dbReference type="ChEBI" id="CHEBI:57783"/>
    </ligand>
</feature>
<feature type="binding site" evidence="3">
    <location>
        <position position="132"/>
    </location>
    <ligand>
        <name>NADPH</name>
        <dbReference type="ChEBI" id="CHEBI:57783"/>
    </ligand>
</feature>
<feature type="binding site" evidence="2">
    <location>
        <position position="220"/>
    </location>
    <ligand>
        <name>NADP(+)</name>
        <dbReference type="ChEBI" id="CHEBI:58349"/>
    </ligand>
</feature>
<feature type="binding site" evidence="2">
    <location>
        <position position="224"/>
    </location>
    <ligand>
        <name>NADP(+)</name>
        <dbReference type="ChEBI" id="CHEBI:58349"/>
    </ligand>
</feature>
<feature type="binding site" evidence="1">
    <location>
        <position position="253"/>
    </location>
    <ligand>
        <name>NADP(+)</name>
        <dbReference type="ChEBI" id="CHEBI:58349"/>
    </ligand>
</feature>
<accession>Q6FQ42</accession>
<proteinExistence type="inferred from homology"/>
<organism>
    <name type="scientific">Candida glabrata (strain ATCC 2001 / BCRC 20586 / JCM 3761 / NBRC 0622 / NRRL Y-65 / CBS 138)</name>
    <name type="common">Yeast</name>
    <name type="synonym">Nakaseomyces glabratus</name>
    <dbReference type="NCBI Taxonomy" id="284593"/>
    <lineage>
        <taxon>Eukaryota</taxon>
        <taxon>Fungi</taxon>
        <taxon>Dikarya</taxon>
        <taxon>Ascomycota</taxon>
        <taxon>Saccharomycotina</taxon>
        <taxon>Saccharomycetes</taxon>
        <taxon>Saccharomycetales</taxon>
        <taxon>Saccharomycetaceae</taxon>
        <taxon>Nakaseomyces</taxon>
    </lineage>
</organism>
<gene>
    <name type="primary">TSC10</name>
    <name type="ordered locus">CAGL0I09328g</name>
</gene>
<name>KDSR_CANGA</name>
<comment type="function">
    <text evidence="4">Catalyzes the reduction of 3'-oxosphinganine (3-ketodihydrosphingosine/KDS) to sphinganine (dihydrosphingosine/DHS), the second step of de novo sphingolipid biosynthesis.</text>
</comment>
<comment type="catalytic activity">
    <reaction evidence="4">
        <text>sphinganine + NADP(+) = 3-oxosphinganine + NADPH + H(+)</text>
        <dbReference type="Rhea" id="RHEA:22640"/>
        <dbReference type="ChEBI" id="CHEBI:15378"/>
        <dbReference type="ChEBI" id="CHEBI:57783"/>
        <dbReference type="ChEBI" id="CHEBI:57817"/>
        <dbReference type="ChEBI" id="CHEBI:58299"/>
        <dbReference type="ChEBI" id="CHEBI:58349"/>
        <dbReference type="EC" id="1.1.1.102"/>
    </reaction>
    <physiologicalReaction direction="right-to-left" evidence="4">
        <dbReference type="Rhea" id="RHEA:22642"/>
    </physiologicalReaction>
</comment>
<comment type="pathway">
    <text>Lipid metabolism; sphingolipid metabolism.</text>
</comment>
<comment type="subcellular location">
    <subcellularLocation>
        <location evidence="4">Endoplasmic reticulum membrane</location>
        <topology evidence="7">Single-pass membrane protein</topology>
    </subcellularLocation>
</comment>
<comment type="similarity">
    <text evidence="7">Belongs to the short-chain dehydrogenases/reductases (SDR) family.</text>
</comment>
<sequence length="363" mass="40410">MFCLEDQVVLIAGGSQGLGKQFGQKYWDESRHSKIILVSRSDVKLRNAITDITGGRQEPVELVMPEVAASEPSASGSSAINLSKSSNHAGFESELRSNSNRSSSSLKESTNVVTHLTTNAADSRIVYIACDLSDPDAVERMFVTLQHNNLLPTQVLACAGGSIPKLFTDLTAKELEMGVKMNYMTTLFVIHKAAQMVPQAHLILFSSSTAFFPFIGYSQYAPAKVSLKALTSILRHELPNTRISCVYPGNFYSEGYVLEEMSKPDITKSIEGSSYPISCEECCDKIVWWLNRGYDDVTTDSIGWFLMSLDMGLNKHNNNSAYWFVQWLIGVIANLLVVPFYMVLCSYQINKWHKQNKNKNTLL</sequence>
<reference key="1">
    <citation type="journal article" date="2004" name="Nature">
        <title>Genome evolution in yeasts.</title>
        <authorList>
            <person name="Dujon B."/>
            <person name="Sherman D."/>
            <person name="Fischer G."/>
            <person name="Durrens P."/>
            <person name="Casaregola S."/>
            <person name="Lafontaine I."/>
            <person name="de Montigny J."/>
            <person name="Marck C."/>
            <person name="Neuveglise C."/>
            <person name="Talla E."/>
            <person name="Goffard N."/>
            <person name="Frangeul L."/>
            <person name="Aigle M."/>
            <person name="Anthouard V."/>
            <person name="Babour A."/>
            <person name="Barbe V."/>
            <person name="Barnay S."/>
            <person name="Blanchin S."/>
            <person name="Beckerich J.-M."/>
            <person name="Beyne E."/>
            <person name="Bleykasten C."/>
            <person name="Boisrame A."/>
            <person name="Boyer J."/>
            <person name="Cattolico L."/>
            <person name="Confanioleri F."/>
            <person name="de Daruvar A."/>
            <person name="Despons L."/>
            <person name="Fabre E."/>
            <person name="Fairhead C."/>
            <person name="Ferry-Dumazet H."/>
            <person name="Groppi A."/>
            <person name="Hantraye F."/>
            <person name="Hennequin C."/>
            <person name="Jauniaux N."/>
            <person name="Joyet P."/>
            <person name="Kachouri R."/>
            <person name="Kerrest A."/>
            <person name="Koszul R."/>
            <person name="Lemaire M."/>
            <person name="Lesur I."/>
            <person name="Ma L."/>
            <person name="Muller H."/>
            <person name="Nicaud J.-M."/>
            <person name="Nikolski M."/>
            <person name="Oztas S."/>
            <person name="Ozier-Kalogeropoulos O."/>
            <person name="Pellenz S."/>
            <person name="Potier S."/>
            <person name="Richard G.-F."/>
            <person name="Straub M.-L."/>
            <person name="Suleau A."/>
            <person name="Swennen D."/>
            <person name="Tekaia F."/>
            <person name="Wesolowski-Louvel M."/>
            <person name="Westhof E."/>
            <person name="Wirth B."/>
            <person name="Zeniou-Meyer M."/>
            <person name="Zivanovic Y."/>
            <person name="Bolotin-Fukuhara M."/>
            <person name="Thierry A."/>
            <person name="Bouchier C."/>
            <person name="Caudron B."/>
            <person name="Scarpelli C."/>
            <person name="Gaillardin C."/>
            <person name="Weissenbach J."/>
            <person name="Wincker P."/>
            <person name="Souciet J.-L."/>
        </authorList>
    </citation>
    <scope>NUCLEOTIDE SEQUENCE [LARGE SCALE GENOMIC DNA]</scope>
    <source>
        <strain>ATCC 2001 / BCRC 20586 / JCM 3761 / NBRC 0622 / NRRL Y-65 / CBS 138</strain>
    </source>
</reference>
<dbReference type="EC" id="1.1.1.102" evidence="4"/>
<dbReference type="EMBL" id="CR380955">
    <property type="protein sequence ID" value="CAG60589.1"/>
    <property type="molecule type" value="Genomic_DNA"/>
</dbReference>
<dbReference type="RefSeq" id="XP_447652.1">
    <property type="nucleotide sequence ID" value="XM_447652.1"/>
</dbReference>
<dbReference type="SMR" id="Q6FQ42"/>
<dbReference type="FunCoup" id="Q6FQ42">
    <property type="interactions" value="134"/>
</dbReference>
<dbReference type="STRING" id="284593.Q6FQ42"/>
<dbReference type="EnsemblFungi" id="CAGL0I09328g-T">
    <property type="protein sequence ID" value="CAGL0I09328g-T-p1"/>
    <property type="gene ID" value="CAGL0I09328g"/>
</dbReference>
<dbReference type="KEGG" id="cgr:2889126"/>
<dbReference type="CGD" id="CAL0129687">
    <property type="gene designation" value="CAGL0I09328g"/>
</dbReference>
<dbReference type="VEuPathDB" id="FungiDB:B1J91_I09328g"/>
<dbReference type="VEuPathDB" id="FungiDB:CAGL0I09328g"/>
<dbReference type="eggNOG" id="KOG1210">
    <property type="taxonomic scope" value="Eukaryota"/>
</dbReference>
<dbReference type="HOGENOM" id="CLU_010194_3_0_1"/>
<dbReference type="InParanoid" id="Q6FQ42"/>
<dbReference type="OMA" id="HELPNTR"/>
<dbReference type="UniPathway" id="UPA00222"/>
<dbReference type="Proteomes" id="UP000002428">
    <property type="component" value="Chromosome I"/>
</dbReference>
<dbReference type="GO" id="GO:0005789">
    <property type="term" value="C:endoplasmic reticulum membrane"/>
    <property type="evidence" value="ECO:0007669"/>
    <property type="project" value="UniProtKB-SubCell"/>
</dbReference>
<dbReference type="GO" id="GO:0005811">
    <property type="term" value="C:lipid droplet"/>
    <property type="evidence" value="ECO:0007669"/>
    <property type="project" value="EnsemblFungi"/>
</dbReference>
<dbReference type="GO" id="GO:0047560">
    <property type="term" value="F:3-dehydrosphinganine reductase activity"/>
    <property type="evidence" value="ECO:0000250"/>
    <property type="project" value="UniProtKB"/>
</dbReference>
<dbReference type="GO" id="GO:0070402">
    <property type="term" value="F:NADPH binding"/>
    <property type="evidence" value="ECO:0000250"/>
    <property type="project" value="UniProtKB"/>
</dbReference>
<dbReference type="GO" id="GO:0006666">
    <property type="term" value="P:3-keto-sphinganine metabolic process"/>
    <property type="evidence" value="ECO:0000250"/>
    <property type="project" value="UniProtKB"/>
</dbReference>
<dbReference type="GO" id="GO:0030148">
    <property type="term" value="P:sphingolipid biosynthetic process"/>
    <property type="evidence" value="ECO:0000250"/>
    <property type="project" value="UniProtKB"/>
</dbReference>
<dbReference type="CDD" id="cd08939">
    <property type="entry name" value="KDSR-like_SDR_c"/>
    <property type="match status" value="1"/>
</dbReference>
<dbReference type="Gene3D" id="3.40.50.720">
    <property type="entry name" value="NAD(P)-binding Rossmann-like Domain"/>
    <property type="match status" value="1"/>
</dbReference>
<dbReference type="InterPro" id="IPR045022">
    <property type="entry name" value="KDSR-like"/>
</dbReference>
<dbReference type="InterPro" id="IPR036291">
    <property type="entry name" value="NAD(P)-bd_dom_sf"/>
</dbReference>
<dbReference type="InterPro" id="IPR002347">
    <property type="entry name" value="SDR_fam"/>
</dbReference>
<dbReference type="PANTHER" id="PTHR43550">
    <property type="entry name" value="3-KETODIHYDROSPHINGOSINE REDUCTASE"/>
    <property type="match status" value="1"/>
</dbReference>
<dbReference type="PANTHER" id="PTHR43550:SF3">
    <property type="entry name" value="3-KETODIHYDROSPHINGOSINE REDUCTASE"/>
    <property type="match status" value="1"/>
</dbReference>
<dbReference type="Pfam" id="PF00106">
    <property type="entry name" value="adh_short"/>
    <property type="match status" value="1"/>
</dbReference>
<dbReference type="PRINTS" id="PR00081">
    <property type="entry name" value="GDHRDH"/>
</dbReference>
<dbReference type="SUPFAM" id="SSF51735">
    <property type="entry name" value="NAD(P)-binding Rossmann-fold domains"/>
    <property type="match status" value="1"/>
</dbReference>
<protein>
    <recommendedName>
        <fullName>3-ketodihydrosphingosine reductase TSC10</fullName>
        <ecNumber evidence="4">1.1.1.102</ecNumber>
    </recommendedName>
    <alternativeName>
        <fullName>3-dehydrosphinganine reductase</fullName>
    </alternativeName>
    <alternativeName>
        <fullName>KDS reductase</fullName>
    </alternativeName>
</protein>